<organism>
    <name type="scientific">Homo sapiens</name>
    <name type="common">Human</name>
    <dbReference type="NCBI Taxonomy" id="9606"/>
    <lineage>
        <taxon>Eukaryota</taxon>
        <taxon>Metazoa</taxon>
        <taxon>Chordata</taxon>
        <taxon>Craniata</taxon>
        <taxon>Vertebrata</taxon>
        <taxon>Euteleostomi</taxon>
        <taxon>Mammalia</taxon>
        <taxon>Eutheria</taxon>
        <taxon>Euarchontoglires</taxon>
        <taxon>Primates</taxon>
        <taxon>Haplorrhini</taxon>
        <taxon>Catarrhini</taxon>
        <taxon>Hominidae</taxon>
        <taxon>Homo</taxon>
    </lineage>
</organism>
<dbReference type="EMBL" id="AF023611">
    <property type="protein sequence ID" value="AAB81950.1"/>
    <property type="molecule type" value="mRNA"/>
</dbReference>
<dbReference type="EMBL" id="AF146373">
    <property type="protein sequence ID" value="AAF17332.1"/>
    <property type="molecule type" value="mRNA"/>
</dbReference>
<dbReference type="EMBL" id="AK314901">
    <property type="protein sequence ID" value="BAG37415.1"/>
    <property type="molecule type" value="mRNA"/>
</dbReference>
<dbReference type="EMBL" id="CH471117">
    <property type="protein sequence ID" value="EAW66640.1"/>
    <property type="molecule type" value="Genomic_DNA"/>
</dbReference>
<dbReference type="EMBL" id="BC001046">
    <property type="protein sequence ID" value="AAH01046.1"/>
    <property type="molecule type" value="mRNA"/>
</dbReference>
<dbReference type="EMBL" id="BC019272">
    <property type="protein sequence ID" value="AAH19272.1"/>
    <property type="molecule type" value="mRNA"/>
</dbReference>
<dbReference type="CCDS" id="CCDS32852.1"/>
<dbReference type="RefSeq" id="NP_001290400.1">
    <property type="nucleotide sequence ID" value="NM_001303471.2"/>
</dbReference>
<dbReference type="RefSeq" id="NP_001292486.1">
    <property type="nucleotide sequence ID" value="NM_001305557.1"/>
</dbReference>
<dbReference type="RefSeq" id="NP_001292492.1">
    <property type="nucleotide sequence ID" value="NM_001305563.1"/>
</dbReference>
<dbReference type="RefSeq" id="NP_001292493.1">
    <property type="nucleotide sequence ID" value="NM_001305564.1"/>
</dbReference>
<dbReference type="RefSeq" id="NP_006692.1">
    <property type="nucleotide sequence ID" value="NM_006701.5"/>
</dbReference>
<dbReference type="PDB" id="1PQN">
    <property type="method" value="NMR"/>
    <property type="chains" value="A=2-128"/>
</dbReference>
<dbReference type="PDB" id="1QGV">
    <property type="method" value="X-ray"/>
    <property type="resolution" value="1.40 A"/>
    <property type="chains" value="A=1-142"/>
</dbReference>
<dbReference type="PDB" id="1SYX">
    <property type="method" value="X-ray"/>
    <property type="resolution" value="2.35 A"/>
    <property type="chains" value="A/C/E=1-142"/>
</dbReference>
<dbReference type="PDB" id="3JCR">
    <property type="method" value="EM"/>
    <property type="resolution" value="7.00 A"/>
    <property type="chains" value="E=1-142"/>
</dbReference>
<dbReference type="PDB" id="4BWQ">
    <property type="method" value="X-ray"/>
    <property type="resolution" value="2.10 A"/>
    <property type="chains" value="A/C/E/G=4-137"/>
</dbReference>
<dbReference type="PDB" id="4BWS">
    <property type="method" value="X-ray"/>
    <property type="resolution" value="2.50 A"/>
    <property type="chains" value="A/D=4-137"/>
</dbReference>
<dbReference type="PDB" id="4CDO">
    <property type="method" value="X-ray"/>
    <property type="resolution" value="2.50 A"/>
    <property type="chains" value="A/C=4-137"/>
</dbReference>
<dbReference type="PDB" id="5O9Z">
    <property type="method" value="EM"/>
    <property type="resolution" value="4.50 A"/>
    <property type="chains" value="J=1-142"/>
</dbReference>
<dbReference type="PDB" id="6AH0">
    <property type="method" value="EM"/>
    <property type="resolution" value="5.70 A"/>
    <property type="chains" value="O=1-142"/>
</dbReference>
<dbReference type="PDB" id="6AHD">
    <property type="method" value="EM"/>
    <property type="resolution" value="3.80 A"/>
    <property type="chains" value="O=1-142"/>
</dbReference>
<dbReference type="PDB" id="6QW6">
    <property type="method" value="EM"/>
    <property type="resolution" value="2.92 A"/>
    <property type="chains" value="5D=1-142"/>
</dbReference>
<dbReference type="PDB" id="6QX9">
    <property type="method" value="EM"/>
    <property type="resolution" value="3.28 A"/>
    <property type="chains" value="5D=1-142"/>
</dbReference>
<dbReference type="PDB" id="8H6E">
    <property type="method" value="EM"/>
    <property type="resolution" value="3.20 A"/>
    <property type="chains" value="4F=1-142"/>
</dbReference>
<dbReference type="PDB" id="8H6J">
    <property type="method" value="EM"/>
    <property type="resolution" value="3.25 A"/>
    <property type="chains" value="4F=1-142"/>
</dbReference>
<dbReference type="PDB" id="8H6K">
    <property type="method" value="EM"/>
    <property type="resolution" value="2.70 A"/>
    <property type="chains" value="4F=1-142"/>
</dbReference>
<dbReference type="PDB" id="8H6L">
    <property type="method" value="EM"/>
    <property type="resolution" value="2.60 A"/>
    <property type="chains" value="4F=1-142"/>
</dbReference>
<dbReference type="PDB" id="8Q7N">
    <property type="method" value="EM"/>
    <property type="resolution" value="3.10 A"/>
    <property type="chains" value="D=1-142"/>
</dbReference>
<dbReference type="PDB" id="8QO9">
    <property type="method" value="EM"/>
    <property type="resolution" value="5.29 A"/>
    <property type="chains" value="D=1-142"/>
</dbReference>
<dbReference type="PDB" id="8QOZ">
    <property type="method" value="EM"/>
    <property type="resolution" value="3.10 A"/>
    <property type="chains" value="D=1-142"/>
</dbReference>
<dbReference type="PDB" id="8QP8">
    <property type="method" value="EM"/>
    <property type="resolution" value="3.50 A"/>
    <property type="chains" value="D=1-142"/>
</dbReference>
<dbReference type="PDB" id="8QP9">
    <property type="method" value="EM"/>
    <property type="resolution" value="4.10 A"/>
    <property type="chains" value="D=1-142"/>
</dbReference>
<dbReference type="PDB" id="8QPA">
    <property type="method" value="EM"/>
    <property type="resolution" value="3.70 A"/>
    <property type="chains" value="D=1-142"/>
</dbReference>
<dbReference type="PDB" id="8QPB">
    <property type="method" value="EM"/>
    <property type="resolution" value="3.70 A"/>
    <property type="chains" value="D=1-142"/>
</dbReference>
<dbReference type="PDB" id="8QPE">
    <property type="method" value="EM"/>
    <property type="resolution" value="3.10 A"/>
    <property type="chains" value="D=1-142"/>
</dbReference>
<dbReference type="PDB" id="8QPK">
    <property type="method" value="EM"/>
    <property type="resolution" value="4.20 A"/>
    <property type="chains" value="D=1-142"/>
</dbReference>
<dbReference type="PDB" id="8QXD">
    <property type="method" value="EM"/>
    <property type="resolution" value="9.60 A"/>
    <property type="chains" value="D=1-142"/>
</dbReference>
<dbReference type="PDB" id="8QZS">
    <property type="method" value="EM"/>
    <property type="resolution" value="4.10 A"/>
    <property type="chains" value="D=1-142"/>
</dbReference>
<dbReference type="PDB" id="8R08">
    <property type="method" value="EM"/>
    <property type="resolution" value="6.10 A"/>
    <property type="chains" value="D=1-142"/>
</dbReference>
<dbReference type="PDB" id="8R09">
    <property type="method" value="EM"/>
    <property type="resolution" value="4.30 A"/>
    <property type="chains" value="D=1-142"/>
</dbReference>
<dbReference type="PDB" id="8R0A">
    <property type="method" value="EM"/>
    <property type="resolution" value="5.80 A"/>
    <property type="chains" value="D=1-142"/>
</dbReference>
<dbReference type="PDB" id="8R0B">
    <property type="method" value="EM"/>
    <property type="resolution" value="4.40 A"/>
    <property type="chains" value="D=1-142"/>
</dbReference>
<dbReference type="PDB" id="8RM5">
    <property type="method" value="EM"/>
    <property type="resolution" value="6.90 A"/>
    <property type="chains" value="D=1-142"/>
</dbReference>
<dbReference type="PDBsum" id="1PQN"/>
<dbReference type="PDBsum" id="1QGV"/>
<dbReference type="PDBsum" id="1SYX"/>
<dbReference type="PDBsum" id="3JCR"/>
<dbReference type="PDBsum" id="4BWQ"/>
<dbReference type="PDBsum" id="4BWS"/>
<dbReference type="PDBsum" id="4CDO"/>
<dbReference type="PDBsum" id="5O9Z"/>
<dbReference type="PDBsum" id="6AH0"/>
<dbReference type="PDBsum" id="6AHD"/>
<dbReference type="PDBsum" id="6QW6"/>
<dbReference type="PDBsum" id="6QX9"/>
<dbReference type="PDBsum" id="8H6E"/>
<dbReference type="PDBsum" id="8H6J"/>
<dbReference type="PDBsum" id="8H6K"/>
<dbReference type="PDBsum" id="8H6L"/>
<dbReference type="PDBsum" id="8Q7N"/>
<dbReference type="PDBsum" id="8QO9"/>
<dbReference type="PDBsum" id="8QOZ"/>
<dbReference type="PDBsum" id="8QP8"/>
<dbReference type="PDBsum" id="8QP9"/>
<dbReference type="PDBsum" id="8QPA"/>
<dbReference type="PDBsum" id="8QPB"/>
<dbReference type="PDBsum" id="8QPE"/>
<dbReference type="PDBsum" id="8QPK"/>
<dbReference type="PDBsum" id="8QXD"/>
<dbReference type="PDBsum" id="8QZS"/>
<dbReference type="PDBsum" id="8R08"/>
<dbReference type="PDBsum" id="8R09"/>
<dbReference type="PDBsum" id="8R0A"/>
<dbReference type="PDBsum" id="8R0B"/>
<dbReference type="PDBsum" id="8RM5"/>
<dbReference type="EMDB" id="EMD-18225"/>
<dbReference type="EMDB" id="EMD-18529"/>
<dbReference type="EMDB" id="EMD-18542"/>
<dbReference type="EMDB" id="EMD-18544"/>
<dbReference type="EMDB" id="EMD-18545"/>
<dbReference type="EMDB" id="EMD-18546"/>
<dbReference type="EMDB" id="EMD-18547"/>
<dbReference type="EMDB" id="EMD-18548"/>
<dbReference type="EMDB" id="EMD-18555"/>
<dbReference type="EMDB" id="EMD-18718"/>
<dbReference type="EMDB" id="EMD-18781"/>
<dbReference type="EMDB" id="EMD-18786"/>
<dbReference type="EMDB" id="EMD-18787"/>
<dbReference type="EMDB" id="EMD-18788"/>
<dbReference type="EMDB" id="EMD-18789"/>
<dbReference type="EMDB" id="EMD-19349"/>
<dbReference type="EMDB" id="EMD-34500"/>
<dbReference type="EMDB" id="EMD-34505"/>
<dbReference type="EMDB" id="EMD-34507"/>
<dbReference type="EMDB" id="EMD-34508"/>
<dbReference type="EMDB" id="EMD-3766"/>
<dbReference type="EMDB" id="EMD-4658"/>
<dbReference type="EMDB" id="EMD-4665"/>
<dbReference type="EMDB" id="EMD-9621"/>
<dbReference type="EMDB" id="EMD-9624"/>
<dbReference type="SMR" id="P83876"/>
<dbReference type="BioGRID" id="116113">
    <property type="interactions" value="91"/>
</dbReference>
<dbReference type="ComplexPortal" id="CPX-2391">
    <property type="entry name" value="U4/U6.U5 small nuclear ribonucleoprotein complex"/>
</dbReference>
<dbReference type="CORUM" id="P83876"/>
<dbReference type="FunCoup" id="P83876">
    <property type="interactions" value="2877"/>
</dbReference>
<dbReference type="IntAct" id="P83876">
    <property type="interactions" value="52"/>
</dbReference>
<dbReference type="MINT" id="P83876"/>
<dbReference type="STRING" id="9606.ENSP00000269601"/>
<dbReference type="GlyCosmos" id="P83876">
    <property type="glycosylation" value="1 site, 2 glycans"/>
</dbReference>
<dbReference type="GlyGen" id="P83876">
    <property type="glycosylation" value="1 site, 2 O-linked glycans (1 site)"/>
</dbReference>
<dbReference type="iPTMnet" id="P83876"/>
<dbReference type="PhosphoSitePlus" id="P83876"/>
<dbReference type="BioMuta" id="TXNL4A"/>
<dbReference type="DMDM" id="46577662"/>
<dbReference type="jPOST" id="P83876"/>
<dbReference type="MassIVE" id="P83876"/>
<dbReference type="PaxDb" id="9606-ENSP00000269601"/>
<dbReference type="PeptideAtlas" id="P83876"/>
<dbReference type="ProteomicsDB" id="57740"/>
<dbReference type="Pumba" id="P83876"/>
<dbReference type="TopDownProteomics" id="P83876"/>
<dbReference type="Antibodypedia" id="23516">
    <property type="antibodies" value="76 antibodies from 20 providers"/>
</dbReference>
<dbReference type="DNASU" id="10907"/>
<dbReference type="Ensembl" id="ENST00000269601.10">
    <property type="protein sequence ID" value="ENSP00000269601.4"/>
    <property type="gene ID" value="ENSG00000141759.15"/>
</dbReference>
<dbReference type="GeneID" id="10907"/>
<dbReference type="KEGG" id="hsa:10907"/>
<dbReference type="MANE-Select" id="ENST00000269601.10">
    <property type="protein sequence ID" value="ENSP00000269601.4"/>
    <property type="RefSeq nucleotide sequence ID" value="NM_006701.5"/>
    <property type="RefSeq protein sequence ID" value="NP_006692.1"/>
</dbReference>
<dbReference type="UCSC" id="uc002lnp.4">
    <property type="organism name" value="human"/>
</dbReference>
<dbReference type="AGR" id="HGNC:30551"/>
<dbReference type="CTD" id="10907"/>
<dbReference type="DisGeNET" id="10907"/>
<dbReference type="GeneCards" id="TXNL4A"/>
<dbReference type="GeneReviews" id="TXNL4A"/>
<dbReference type="HGNC" id="HGNC:30551">
    <property type="gene designation" value="TXNL4A"/>
</dbReference>
<dbReference type="HPA" id="ENSG00000141759">
    <property type="expression patterns" value="Low tissue specificity"/>
</dbReference>
<dbReference type="MalaCards" id="TXNL4A"/>
<dbReference type="MIM" id="608572">
    <property type="type" value="phenotype"/>
</dbReference>
<dbReference type="MIM" id="611595">
    <property type="type" value="gene"/>
</dbReference>
<dbReference type="neXtProt" id="NX_P83876"/>
<dbReference type="OpenTargets" id="ENSG00000141759"/>
<dbReference type="Orphanet" id="1200">
    <property type="disease" value="Burn-McKeown syndrome"/>
</dbReference>
<dbReference type="PharmGKB" id="PA134937290"/>
<dbReference type="VEuPathDB" id="HostDB:ENSG00000141759"/>
<dbReference type="eggNOG" id="KOG3414">
    <property type="taxonomic scope" value="Eukaryota"/>
</dbReference>
<dbReference type="GeneTree" id="ENSGT00390000010779"/>
<dbReference type="HOGENOM" id="CLU_117348_0_0_1"/>
<dbReference type="InParanoid" id="P83876"/>
<dbReference type="OMA" id="GMYELYD"/>
<dbReference type="OrthoDB" id="147752at2759"/>
<dbReference type="PAN-GO" id="P83876">
    <property type="GO annotations" value="3 GO annotations based on evolutionary models"/>
</dbReference>
<dbReference type="PhylomeDB" id="P83876"/>
<dbReference type="TreeFam" id="TF313562"/>
<dbReference type="PathwayCommons" id="P83876"/>
<dbReference type="Reactome" id="R-HSA-72163">
    <property type="pathway name" value="mRNA Splicing - Major Pathway"/>
</dbReference>
<dbReference type="Reactome" id="R-HSA-72165">
    <property type="pathway name" value="mRNA Splicing - Minor Pathway"/>
</dbReference>
<dbReference type="SignaLink" id="P83876"/>
<dbReference type="SIGNOR" id="P83876"/>
<dbReference type="BioGRID-ORCS" id="10907">
    <property type="hits" value="840 hits in 1042 CRISPR screens"/>
</dbReference>
<dbReference type="ChiTaRS" id="TXNL4A">
    <property type="organism name" value="human"/>
</dbReference>
<dbReference type="EvolutionaryTrace" id="P83876"/>
<dbReference type="GeneWiki" id="TXNL4A"/>
<dbReference type="GenomeRNAi" id="10907"/>
<dbReference type="Pharos" id="P83876">
    <property type="development level" value="Tbio"/>
</dbReference>
<dbReference type="PRO" id="PR:P83876"/>
<dbReference type="Proteomes" id="UP000005640">
    <property type="component" value="Chromosome 18"/>
</dbReference>
<dbReference type="RNAct" id="P83876">
    <property type="molecule type" value="protein"/>
</dbReference>
<dbReference type="Bgee" id="ENSG00000141759">
    <property type="expression patterns" value="Expressed in parotid gland and 203 other cell types or tissues"/>
</dbReference>
<dbReference type="ExpressionAtlas" id="P83876">
    <property type="expression patterns" value="baseline and differential"/>
</dbReference>
<dbReference type="GO" id="GO:0005829">
    <property type="term" value="C:cytosol"/>
    <property type="evidence" value="ECO:0000314"/>
    <property type="project" value="HPA"/>
</dbReference>
<dbReference type="GO" id="GO:0005654">
    <property type="term" value="C:nucleoplasm"/>
    <property type="evidence" value="ECO:0000314"/>
    <property type="project" value="HPA"/>
</dbReference>
<dbReference type="GO" id="GO:0005634">
    <property type="term" value="C:nucleus"/>
    <property type="evidence" value="ECO:0000314"/>
    <property type="project" value="UniProtKB"/>
</dbReference>
<dbReference type="GO" id="GO:0005681">
    <property type="term" value="C:spliceosomal complex"/>
    <property type="evidence" value="ECO:0000318"/>
    <property type="project" value="GO_Central"/>
</dbReference>
<dbReference type="GO" id="GO:0071005">
    <property type="term" value="C:U2-type precatalytic spliceosome"/>
    <property type="evidence" value="ECO:0000314"/>
    <property type="project" value="UniProtKB"/>
</dbReference>
<dbReference type="GO" id="GO:0046540">
    <property type="term" value="C:U4/U6 x U5 tri-snRNP complex"/>
    <property type="evidence" value="ECO:0000314"/>
    <property type="project" value="UniProtKB"/>
</dbReference>
<dbReference type="GO" id="GO:0005682">
    <property type="term" value="C:U5 snRNP"/>
    <property type="evidence" value="ECO:0000318"/>
    <property type="project" value="GO_Central"/>
</dbReference>
<dbReference type="GO" id="GO:0051301">
    <property type="term" value="P:cell division"/>
    <property type="evidence" value="ECO:0007669"/>
    <property type="project" value="UniProtKB-KW"/>
</dbReference>
<dbReference type="GO" id="GO:0000398">
    <property type="term" value="P:mRNA splicing, via spliceosome"/>
    <property type="evidence" value="ECO:0000314"/>
    <property type="project" value="UniProtKB"/>
</dbReference>
<dbReference type="GO" id="GO:0000375">
    <property type="term" value="P:RNA splicing, via transesterification reactions"/>
    <property type="evidence" value="ECO:0000304"/>
    <property type="project" value="UniProtKB"/>
</dbReference>
<dbReference type="GO" id="GO:0000245">
    <property type="term" value="P:spliceosomal complex assembly"/>
    <property type="evidence" value="ECO:0000304"/>
    <property type="project" value="UniProtKB"/>
</dbReference>
<dbReference type="CDD" id="cd02954">
    <property type="entry name" value="DIM1"/>
    <property type="match status" value="1"/>
</dbReference>
<dbReference type="FunFam" id="3.40.30.10:FF:000004">
    <property type="entry name" value="Spliceosomal protein DIB1"/>
    <property type="match status" value="1"/>
</dbReference>
<dbReference type="Gene3D" id="3.40.30.10">
    <property type="entry name" value="Glutaredoxin"/>
    <property type="match status" value="1"/>
</dbReference>
<dbReference type="IDEAL" id="IID00559"/>
<dbReference type="InterPro" id="IPR004123">
    <property type="entry name" value="Dim1"/>
</dbReference>
<dbReference type="InterPro" id="IPR036249">
    <property type="entry name" value="Thioredoxin-like_sf"/>
</dbReference>
<dbReference type="PANTHER" id="PTHR12052:SF5">
    <property type="entry name" value="THIOREDOXIN-LIKE PROTEIN 4A"/>
    <property type="match status" value="1"/>
</dbReference>
<dbReference type="PANTHER" id="PTHR12052">
    <property type="entry name" value="THIOREDOXIN-LIKE PROTEN 4A, 4B"/>
    <property type="match status" value="1"/>
</dbReference>
<dbReference type="Pfam" id="PF02966">
    <property type="entry name" value="DIM1"/>
    <property type="match status" value="1"/>
</dbReference>
<dbReference type="PIRSF" id="PIRSF017199">
    <property type="entry name" value="mRNA_splic_U5"/>
    <property type="match status" value="1"/>
</dbReference>
<dbReference type="SMART" id="SM01410">
    <property type="entry name" value="DIM1"/>
    <property type="match status" value="1"/>
</dbReference>
<dbReference type="SUPFAM" id="SSF52833">
    <property type="entry name" value="Thioredoxin-like"/>
    <property type="match status" value="1"/>
</dbReference>
<keyword id="KW-0002">3D-structure</keyword>
<keyword id="KW-0131">Cell cycle</keyword>
<keyword id="KW-0132">Cell division</keyword>
<keyword id="KW-0209">Deafness</keyword>
<keyword id="KW-0903">Direct protein sequencing</keyword>
<keyword id="KW-1015">Disulfide bond</keyword>
<keyword id="KW-0498">Mitosis</keyword>
<keyword id="KW-0507">mRNA processing</keyword>
<keyword id="KW-0508">mRNA splicing</keyword>
<keyword id="KW-0539">Nucleus</keyword>
<keyword id="KW-0597">Phosphoprotein</keyword>
<keyword id="KW-1267">Proteomics identification</keyword>
<keyword id="KW-1185">Reference proteome</keyword>
<keyword id="KW-0747">Spliceosome</keyword>
<reference key="1">
    <citation type="submission" date="1997-09" db="EMBL/GenBank/DDBJ databases">
        <title>Human homologue of the S. pombe Dim1p gene.</title>
        <authorList>
            <person name="Larin D."/>
            <person name="Ross B.M."/>
            <person name="Gilliam T.C."/>
        </authorList>
    </citation>
    <scope>NUCLEOTIDE SEQUENCE [MRNA]</scope>
    <source>
        <tissue>Liver</tissue>
    </source>
</reference>
<reference key="2">
    <citation type="journal article" date="1999" name="J. Mol. Biol.">
        <title>Identification, characterization and crystal structure analysis of the human spliceosomal U5 snRNP-specific 15kD protein.</title>
        <authorList>
            <person name="Reuter K."/>
            <person name="Nottrott S."/>
            <person name="Fabrizio P."/>
            <person name="Luehrmann R."/>
            <person name="Ficner R."/>
        </authorList>
    </citation>
    <scope>NUCLEOTIDE SEQUENCE [MRNA]</scope>
    <scope>PARTIAL PROTEIN SEQUENCE</scope>
    <scope>X-RAY CRYSTALLOGRAPHY (1.4 ANGSTROMS)</scope>
    <scope>PROBABLE FUNCTION</scope>
    <scope>DISULFIDE BOND</scope>
    <scope>SUBUNIT</scope>
    <scope>SUBCELLULAR LOCATION</scope>
</reference>
<reference key="3">
    <citation type="journal article" date="2004" name="Nat. Genet.">
        <title>Complete sequencing and characterization of 21,243 full-length human cDNAs.</title>
        <authorList>
            <person name="Ota T."/>
            <person name="Suzuki Y."/>
            <person name="Nishikawa T."/>
            <person name="Otsuki T."/>
            <person name="Sugiyama T."/>
            <person name="Irie R."/>
            <person name="Wakamatsu A."/>
            <person name="Hayashi K."/>
            <person name="Sato H."/>
            <person name="Nagai K."/>
            <person name="Kimura K."/>
            <person name="Makita H."/>
            <person name="Sekine M."/>
            <person name="Obayashi M."/>
            <person name="Nishi T."/>
            <person name="Shibahara T."/>
            <person name="Tanaka T."/>
            <person name="Ishii S."/>
            <person name="Yamamoto J."/>
            <person name="Saito K."/>
            <person name="Kawai Y."/>
            <person name="Isono Y."/>
            <person name="Nakamura Y."/>
            <person name="Nagahari K."/>
            <person name="Murakami K."/>
            <person name="Yasuda T."/>
            <person name="Iwayanagi T."/>
            <person name="Wagatsuma M."/>
            <person name="Shiratori A."/>
            <person name="Sudo H."/>
            <person name="Hosoiri T."/>
            <person name="Kaku Y."/>
            <person name="Kodaira H."/>
            <person name="Kondo H."/>
            <person name="Sugawara M."/>
            <person name="Takahashi M."/>
            <person name="Kanda K."/>
            <person name="Yokoi T."/>
            <person name="Furuya T."/>
            <person name="Kikkawa E."/>
            <person name="Omura Y."/>
            <person name="Abe K."/>
            <person name="Kamihara K."/>
            <person name="Katsuta N."/>
            <person name="Sato K."/>
            <person name="Tanikawa M."/>
            <person name="Yamazaki M."/>
            <person name="Ninomiya K."/>
            <person name="Ishibashi T."/>
            <person name="Yamashita H."/>
            <person name="Murakawa K."/>
            <person name="Fujimori K."/>
            <person name="Tanai H."/>
            <person name="Kimata M."/>
            <person name="Watanabe M."/>
            <person name="Hiraoka S."/>
            <person name="Chiba Y."/>
            <person name="Ishida S."/>
            <person name="Ono Y."/>
            <person name="Takiguchi S."/>
            <person name="Watanabe S."/>
            <person name="Yosida M."/>
            <person name="Hotuta T."/>
            <person name="Kusano J."/>
            <person name="Kanehori K."/>
            <person name="Takahashi-Fujii A."/>
            <person name="Hara H."/>
            <person name="Tanase T.-O."/>
            <person name="Nomura Y."/>
            <person name="Togiya S."/>
            <person name="Komai F."/>
            <person name="Hara R."/>
            <person name="Takeuchi K."/>
            <person name="Arita M."/>
            <person name="Imose N."/>
            <person name="Musashino K."/>
            <person name="Yuuki H."/>
            <person name="Oshima A."/>
            <person name="Sasaki N."/>
            <person name="Aotsuka S."/>
            <person name="Yoshikawa Y."/>
            <person name="Matsunawa H."/>
            <person name="Ichihara T."/>
            <person name="Shiohata N."/>
            <person name="Sano S."/>
            <person name="Moriya S."/>
            <person name="Momiyama H."/>
            <person name="Satoh N."/>
            <person name="Takami S."/>
            <person name="Terashima Y."/>
            <person name="Suzuki O."/>
            <person name="Nakagawa S."/>
            <person name="Senoh A."/>
            <person name="Mizoguchi H."/>
            <person name="Goto Y."/>
            <person name="Shimizu F."/>
            <person name="Wakebe H."/>
            <person name="Hishigaki H."/>
            <person name="Watanabe T."/>
            <person name="Sugiyama A."/>
            <person name="Takemoto M."/>
            <person name="Kawakami B."/>
            <person name="Yamazaki M."/>
            <person name="Watanabe K."/>
            <person name="Kumagai A."/>
            <person name="Itakura S."/>
            <person name="Fukuzumi Y."/>
            <person name="Fujimori Y."/>
            <person name="Komiyama M."/>
            <person name="Tashiro H."/>
            <person name="Tanigami A."/>
            <person name="Fujiwara T."/>
            <person name="Ono T."/>
            <person name="Yamada K."/>
            <person name="Fujii Y."/>
            <person name="Ozaki K."/>
            <person name="Hirao M."/>
            <person name="Ohmori Y."/>
            <person name="Kawabata A."/>
            <person name="Hikiji T."/>
            <person name="Kobatake N."/>
            <person name="Inagaki H."/>
            <person name="Ikema Y."/>
            <person name="Okamoto S."/>
            <person name="Okitani R."/>
            <person name="Kawakami T."/>
            <person name="Noguchi S."/>
            <person name="Itoh T."/>
            <person name="Shigeta K."/>
            <person name="Senba T."/>
            <person name="Matsumura K."/>
            <person name="Nakajima Y."/>
            <person name="Mizuno T."/>
            <person name="Morinaga M."/>
            <person name="Sasaki M."/>
            <person name="Togashi T."/>
            <person name="Oyama M."/>
            <person name="Hata H."/>
            <person name="Watanabe M."/>
            <person name="Komatsu T."/>
            <person name="Mizushima-Sugano J."/>
            <person name="Satoh T."/>
            <person name="Shirai Y."/>
            <person name="Takahashi Y."/>
            <person name="Nakagawa K."/>
            <person name="Okumura K."/>
            <person name="Nagase T."/>
            <person name="Nomura N."/>
            <person name="Kikuchi H."/>
            <person name="Masuho Y."/>
            <person name="Yamashita R."/>
            <person name="Nakai K."/>
            <person name="Yada T."/>
            <person name="Nakamura Y."/>
            <person name="Ohara O."/>
            <person name="Isogai T."/>
            <person name="Sugano S."/>
        </authorList>
    </citation>
    <scope>NUCLEOTIDE SEQUENCE [LARGE SCALE MRNA]</scope>
    <source>
        <tissue>Cerebellum</tissue>
    </source>
</reference>
<reference key="4">
    <citation type="submission" date="2005-07" db="EMBL/GenBank/DDBJ databases">
        <authorList>
            <person name="Mural R.J."/>
            <person name="Istrail S."/>
            <person name="Sutton G.G."/>
            <person name="Florea L."/>
            <person name="Halpern A.L."/>
            <person name="Mobarry C.M."/>
            <person name="Lippert R."/>
            <person name="Walenz B."/>
            <person name="Shatkay H."/>
            <person name="Dew I."/>
            <person name="Miller J.R."/>
            <person name="Flanigan M.J."/>
            <person name="Edwards N.J."/>
            <person name="Bolanos R."/>
            <person name="Fasulo D."/>
            <person name="Halldorsson B.V."/>
            <person name="Hannenhalli S."/>
            <person name="Turner R."/>
            <person name="Yooseph S."/>
            <person name="Lu F."/>
            <person name="Nusskern D.R."/>
            <person name="Shue B.C."/>
            <person name="Zheng X.H."/>
            <person name="Zhong F."/>
            <person name="Delcher A.L."/>
            <person name="Huson D.H."/>
            <person name="Kravitz S.A."/>
            <person name="Mouchard L."/>
            <person name="Reinert K."/>
            <person name="Remington K.A."/>
            <person name="Clark A.G."/>
            <person name="Waterman M.S."/>
            <person name="Eichler E.E."/>
            <person name="Adams M.D."/>
            <person name="Hunkapiller M.W."/>
            <person name="Myers E.W."/>
            <person name="Venter J.C."/>
        </authorList>
    </citation>
    <scope>NUCLEOTIDE SEQUENCE [LARGE SCALE GENOMIC DNA]</scope>
</reference>
<reference key="5">
    <citation type="journal article" date="2004" name="Genome Res.">
        <title>The status, quality, and expansion of the NIH full-length cDNA project: the Mammalian Gene Collection (MGC).</title>
        <authorList>
            <consortium name="The MGC Project Team"/>
        </authorList>
    </citation>
    <scope>NUCLEOTIDE SEQUENCE [LARGE SCALE MRNA]</scope>
    <source>
        <tissue>Lung</tissue>
    </source>
</reference>
<reference key="6">
    <citation type="journal article" date="2000" name="Gene">
        <title>Evidence that Dim1 associates with proteins involved in pre-mRNA splicing, and delineation of residues essential for Dim1 interactions with hnRNP F and Npw38/PQBP-1.</title>
        <authorList>
            <person name="Zhang Y.-Z."/>
            <person name="Lindblom T."/>
            <person name="Chang A."/>
            <person name="Sudol M."/>
            <person name="Sluder A.E."/>
            <person name="Golemis E.A."/>
        </authorList>
    </citation>
    <scope>SUBCELLULAR LOCATION</scope>
    <scope>INTERACTION WITH HNRPF; HNRPH2; NEDD9 AND PQBP1</scope>
    <scope>MUTAGENESIS</scope>
</reference>
<reference key="7">
    <citation type="journal article" date="2006" name="RNA">
        <title>The network of protein-protein interactions within the human U4/U6.U5 tri-snRNP.</title>
        <authorList>
            <person name="Liu S."/>
            <person name="Rauhut R."/>
            <person name="Vornlocher H.-P."/>
            <person name="Luehrmann R."/>
        </authorList>
    </citation>
    <scope>SUBUNIT</scope>
</reference>
<reference key="8">
    <citation type="journal article" date="2008" name="Proc. Natl. Acad. Sci. U.S.A.">
        <title>A quantitative atlas of mitotic phosphorylation.</title>
        <authorList>
            <person name="Dephoure N."/>
            <person name="Zhou C."/>
            <person name="Villen J."/>
            <person name="Beausoleil S.A."/>
            <person name="Bakalarski C.E."/>
            <person name="Elledge S.J."/>
            <person name="Gygi S.P."/>
        </authorList>
    </citation>
    <scope>IDENTIFICATION BY MASS SPECTROMETRY [LARGE SCALE ANALYSIS]</scope>
    <source>
        <tissue>Cervix carcinoma</tissue>
    </source>
</reference>
<reference key="9">
    <citation type="journal article" date="2009" name="Sci. Signal.">
        <title>Quantitative phosphoproteomic analysis of T cell receptor signaling reveals system-wide modulation of protein-protein interactions.</title>
        <authorList>
            <person name="Mayya V."/>
            <person name="Lundgren D.H."/>
            <person name="Hwang S.-I."/>
            <person name="Rezaul K."/>
            <person name="Wu L."/>
            <person name="Eng J.K."/>
            <person name="Rodionov V."/>
            <person name="Han D.K."/>
        </authorList>
    </citation>
    <scope>PHOSPHORYLATION [LARGE SCALE ANALYSIS] AT SER-132</scope>
    <scope>IDENTIFICATION BY MASS SPECTROMETRY [LARGE SCALE ANALYSIS]</scope>
    <source>
        <tissue>Leukemic T-cell</tissue>
    </source>
</reference>
<reference key="10">
    <citation type="journal article" date="2010" name="Mol. Cancer Res.">
        <title>Interactions of ErbB4 and Kap1 connect the growth factor and DNA damage response pathways.</title>
        <authorList>
            <person name="Gilmore-Hebert M."/>
            <person name="Ramabhadran R."/>
            <person name="Stern D.F."/>
        </authorList>
    </citation>
    <scope>IDENTIFICATION BY MASS SPECTROMETRY</scope>
    <scope>INTERACTION WITH ERBB4</scope>
    <scope>SUBCELLULAR LOCATION</scope>
</reference>
<reference key="11">
    <citation type="journal article" date="2011" name="BMC Syst. Biol.">
        <title>Initial characterization of the human central proteome.</title>
        <authorList>
            <person name="Burkard T.R."/>
            <person name="Planyavsky M."/>
            <person name="Kaupe I."/>
            <person name="Breitwieser F.P."/>
            <person name="Buerckstuemmer T."/>
            <person name="Bennett K.L."/>
            <person name="Superti-Furga G."/>
            <person name="Colinge J."/>
        </authorList>
    </citation>
    <scope>IDENTIFICATION BY MASS SPECTROMETRY [LARGE SCALE ANALYSIS]</scope>
</reference>
<reference key="12">
    <citation type="journal article" date="2014" name="Am. J. Hum. Genet.">
        <title>Compound heterozygosity of low-frequency promoter deletions and rare loss-of-function mutations in TXNL4A causes Burn-McKeown syndrome.</title>
        <authorList>
            <person name="Wieczorek D."/>
            <person name="Newman W.G."/>
            <person name="Wieland T."/>
            <person name="Berulava T."/>
            <person name="Kaffe M."/>
            <person name="Falkenstein D."/>
            <person name="Beetz C."/>
            <person name="Graf E."/>
            <person name="Schwarzmayr T."/>
            <person name="Douzgou S."/>
            <person name="Clayton-Smith J."/>
            <person name="Daly S.B."/>
            <person name="Williams S.G."/>
            <person name="Bhaskar S.S."/>
            <person name="Urquhart J.E."/>
            <person name="Anderson B."/>
            <person name="O'Sullivan J."/>
            <person name="Boute O."/>
            <person name="Gundlach J."/>
            <person name="Czeschik J.C."/>
            <person name="van Essen A.J."/>
            <person name="Hazan F."/>
            <person name="Park S."/>
            <person name="Hing A."/>
            <person name="Kuechler A."/>
            <person name="Lohmann D.R."/>
            <person name="Ludwig K.U."/>
            <person name="Mangold E."/>
            <person name="Steenpass L."/>
            <person name="Zeschnigk M."/>
            <person name="Lemke J.R."/>
            <person name="Lourenco C.M."/>
            <person name="Hehr U."/>
            <person name="Prott E.C."/>
            <person name="Waldenberger M."/>
            <person name="Bohmer A.C."/>
            <person name="Horsthemke B."/>
            <person name="O'Keefe R.T."/>
            <person name="Meitinger T."/>
            <person name="Burn J."/>
            <person name="Ludecke H.J."/>
            <person name="Strom T.M."/>
        </authorList>
    </citation>
    <scope>INVOLVEMENT IN BMKS</scope>
</reference>
<reference key="13">
    <citation type="journal article" date="1999" name="Physiol. Genomics">
        <title>The evolutionarily conserved Dim1 protein defines a novel branch of the thioredoxin fold superfamily.</title>
        <authorList>
            <person name="Zhang Y.-Z."/>
            <person name="Gould K.L."/>
            <person name="Dunbrack R.L. Jr."/>
            <person name="Cheng H."/>
            <person name="Roder H."/>
            <person name="Golemis E.A."/>
        </authorList>
    </citation>
    <scope>STRUCTURE BY NMR</scope>
    <scope>3D-STRUCTURE MODELING</scope>
    <scope>MUTAGENESIS OF CYS-38</scope>
</reference>
<reference key="14">
    <citation type="journal article" date="2003" name="Biochemistry">
        <title>Structure, stability, and function of hDim1 investigated by NMR, circular dichroism, and mutational analysis.</title>
        <authorList>
            <person name="Zhang Y.Z."/>
            <person name="Cheng H."/>
            <person name="Gould K.L."/>
            <person name="Golemis E.A."/>
            <person name="Roder H."/>
        </authorList>
    </citation>
    <scope>STRUCTURE BY NMR OF 1-128</scope>
    <scope>CIRCULAR DICHROISM</scope>
    <scope>DISULFIDE BOND</scope>
    <scope>MUTAGENESIS</scope>
</reference>
<reference key="15">
    <citation type="journal article" date="2007" name="J. Mol. Biol.">
        <title>Structural basis for the bifunctionality of the U5 snRNP 52K protein (CD2BP2).</title>
        <authorList>
            <person name="Nielsen T.K."/>
            <person name="Liu S."/>
            <person name="Luhrmann R."/>
            <person name="Ficner R."/>
        </authorList>
    </citation>
    <scope>X-RAY CRYSTALLOGRAPHY (2.35 ANGSTROMS) IN COMPLEX WITH CD2BP2</scope>
    <scope>INTERACTION WITH CD2BP2</scope>
</reference>
<reference key="16">
    <citation type="journal article" date="2014" name="Nat. Commun.">
        <title>Mutations in the PQBP1 gene prevent its interaction with the spliceosomal protein U5-15 kD.</title>
        <authorList>
            <person name="Mizuguchi M."/>
            <person name="Obita T."/>
            <person name="Serita T."/>
            <person name="Kojima R."/>
            <person name="Nabeshima Y."/>
            <person name="Okazawa H."/>
        </authorList>
    </citation>
    <scope>X-RAY CRYSTALLOGRAPHY (2.10 ANGSTROMS) OF 4-137 IN COMPLEX WITH PQBP1 AND CD2BP2</scope>
    <scope>INTERACTION WITH PQBP1 AND CD2BP2</scope>
</reference>
<reference evidence="18" key="17">
    <citation type="journal article" date="2016" name="Science">
        <title>Molecular architecture of the human U4/U6.U5 tri-snRNP.</title>
        <authorList>
            <person name="Agafonov D.E."/>
            <person name="Kastner B."/>
            <person name="Dybkov O."/>
            <person name="Hofele R.V."/>
            <person name="Liu W.T."/>
            <person name="Urlaub H."/>
            <person name="Luhrmann R."/>
            <person name="Stark H."/>
        </authorList>
    </citation>
    <scope>STRUCTURE BY ELECTRON MICROSCOPY (7.00 ANGSTROMS)</scope>
    <scope>FUNCTION</scope>
    <scope>SUBCELLULAR LOCATION</scope>
    <scope>SUBUNIT</scope>
    <scope>IDENTIFICATION BY MASS SPECTROMETRY</scope>
</reference>
<reference evidence="19" key="18">
    <citation type="journal article" date="2017" name="Cell">
        <title>Cryo-EM Structure of a Pre-catalytic Human Spliceosome Primed for Activation.</title>
        <authorList>
            <person name="Bertram K."/>
            <person name="Agafonov D.E."/>
            <person name="Dybkov O."/>
            <person name="Haselbach D."/>
            <person name="Leelaram M.N."/>
            <person name="Will C.L."/>
            <person name="Urlaub H."/>
            <person name="Kastner B."/>
            <person name="Luhrmann R."/>
            <person name="Stark H."/>
        </authorList>
    </citation>
    <scope>STRUCTURE BY ELECTRON MICROSCOPY (4.50 ANGSTROMS)</scope>
    <scope>FUNCTION</scope>
    <scope>SUBCELLULAR LOCATION</scope>
    <scope>SUBUNIT</scope>
    <scope>IDENTIFICATION BY MASS SPECTROMETRY</scope>
</reference>
<protein>
    <recommendedName>
        <fullName>Thioredoxin-like protein 4A</fullName>
    </recommendedName>
    <alternativeName>
        <fullName evidence="13 14">DIM1 protein homolog</fullName>
    </alternativeName>
    <alternativeName>
        <fullName evidence="12">Spliceosomal U5 snRNP-specific 15 kDa protein</fullName>
    </alternativeName>
    <alternativeName>
        <fullName>Thioredoxin-like U5 snRNP protein U5-15kD</fullName>
    </alternativeName>
</protein>
<comment type="function">
    <text evidence="11 16 17">Plays a role in pre-mRNA splicing as component of the U5 snRNP and U4/U6-U5 tri-snRNP complexes that are involved in spliceosome assembly, and as component of the precatalytic spliceosome (spliceosome B complex).</text>
</comment>
<comment type="subunit">
    <text evidence="1 3 5 6 7 8 10 11">Component of the precatalytic spliceosome (spliceosome B complex) (PubMed:28781166). Component of the U5 snRNP complex (PubMed:10610776). Component of the U4/U6-U5 tri-snRNP complex (PubMed:26912367). The U4/U6-U5 tri-snRNP complex is a building block of the precatalytic spliceosome (spliceosome B complex) (PubMed:26912367, PubMed:28781166). The U4/U6-U5 tri-snRNP complex is composed of the U4, U6 and U5 snRNAs and at least PRPF3, PRPF4, PRPF6, PRPF8, PRPF31, SNRNP200, TXNL4A, SNRNP40, SNRPB, SNRPD1, SNRPD2, SNRPD3, SNRPE, SNRPF, SNRPG, DDX23, CD2BP2, PPIH, SNU13, EFTUD2, SART1 and USP39, plus LSM2, LSM3, LSM4, LSM5, LSM6, LSM7 and LSM8 (PubMed:16723661, PubMed:26912367, PubMed:28781166). Directly interacts with CD2BP2 (PubMed:17467737, PubMed:24781215). Interacts with HNRPF, HNRPH2, NEDD9 and PQBP1 (PubMed:11054566). Interacts with ERBB4 (PubMed:20858735).</text>
</comment>
<comment type="interaction">
    <interactant intactId="EBI-746539">
        <id>P83876</id>
    </interactant>
    <interactant intactId="EBI-768015">
        <id>O95400</id>
        <label>CD2BP2</label>
    </interactant>
    <organismsDiffer>false</organismsDiffer>
    <experiments>6</experiments>
</comment>
<comment type="interaction">
    <interactant intactId="EBI-746539">
        <id>P83876</id>
    </interactant>
    <interactant intactId="EBI-742054">
        <id>Q96D03</id>
        <label>DDIT4L</label>
    </interactant>
    <organismsDiffer>false</organismsDiffer>
    <experiments>3</experiments>
</comment>
<comment type="interaction">
    <interactant intactId="EBI-746539">
        <id>P83876</id>
    </interactant>
    <interactant intactId="EBI-949824">
        <id>O00471</id>
        <label>EXOC5</label>
    </interactant>
    <organismsDiffer>false</organismsDiffer>
    <experiments>3</experiments>
</comment>
<comment type="interaction">
    <interactant intactId="EBI-746539">
        <id>P83876</id>
    </interactant>
    <interactant intactId="EBI-741037">
        <id>Q9BRK4</id>
        <label>LZTS2</label>
    </interactant>
    <organismsDiffer>false</organismsDiffer>
    <experiments>3</experiments>
</comment>
<comment type="interaction">
    <interactant intactId="EBI-746539">
        <id>P83876</id>
    </interactant>
    <interactant intactId="EBI-536755">
        <id>O94906</id>
        <label>PRPF6</label>
    </interactant>
    <organismsDiffer>false</organismsDiffer>
    <experiments>6</experiments>
</comment>
<comment type="subcellular location">
    <subcellularLocation>
        <location evidence="1 3 7 10 11">Nucleus</location>
    </subcellularLocation>
</comment>
<comment type="PTM">
    <text evidence="1 4">The disulfide bond seen in structures determined by X-ray crystallography (PubMed:10610776) and NMR (PubMed:12911302) is not essential for protein folding and function (PubMed:12911302, PubMed:17467737).</text>
</comment>
<comment type="disease" evidence="9">
    <disease id="DI-04322">
        <name>Burn-McKeown syndrome</name>
        <acronym>BMKS</acronym>
        <description>A disease characterized by choanal atresia, sensorineural deafness, cardiac defects, and typical craniofacial dysmorphism consisting of narrow palpebral fissures, coloboma of the lower eyelids, prominent nose with high nasal bridge, short philtrum, cleft lip and/or palate, and large and protruding ears. Intellectual development is normal.</description>
        <dbReference type="MIM" id="608572"/>
    </disease>
    <text>The disease is caused by variants affecting the gene represented in this entry.</text>
</comment>
<comment type="similarity">
    <text evidence="15">Belongs to the DIM1 family.</text>
</comment>
<sequence>MSYMLPHLHNGWQVDQAILSEEDRVVVIRFGHDWDPTCMKMDEVLYSIAEKVKNFAVIYLVDITEVPDFNKMYELYDPCTVMFFFRNKHIMIDLGTGNNNKINWAMEDKQEMVDIIETVYRGARKGRGLVVSPKDYSTKYRY</sequence>
<feature type="chain" id="PRO_0000218287" description="Thioredoxin-like protein 4A">
    <location>
        <begin position="1"/>
        <end position="142"/>
    </location>
</feature>
<feature type="modified residue" description="Phosphoserine" evidence="20">
    <location>
        <position position="132"/>
    </location>
</feature>
<feature type="disulfide bond" evidence="1 4">
    <location>
        <begin position="38"/>
        <end position="79"/>
    </location>
</feature>
<feature type="mutagenesis site" description="Viable when expressed in S.pombe." evidence="2">
    <original>C</original>
    <variation>A</variation>
    <location>
        <position position="38"/>
    </location>
</feature>
<feature type="helix" evidence="22">
    <location>
        <begin position="11"/>
        <end position="19"/>
    </location>
</feature>
<feature type="strand" evidence="22">
    <location>
        <begin position="22"/>
        <end position="31"/>
    </location>
</feature>
<feature type="strand" evidence="24">
    <location>
        <begin position="33"/>
        <end position="35"/>
    </location>
</feature>
<feature type="helix" evidence="22">
    <location>
        <begin position="36"/>
        <end position="52"/>
    </location>
</feature>
<feature type="turn" evidence="22">
    <location>
        <begin position="53"/>
        <end position="55"/>
    </location>
</feature>
<feature type="strand" evidence="22">
    <location>
        <begin position="56"/>
        <end position="62"/>
    </location>
</feature>
<feature type="turn" evidence="22">
    <location>
        <begin position="63"/>
        <end position="65"/>
    </location>
</feature>
<feature type="turn" evidence="22">
    <location>
        <begin position="68"/>
        <end position="71"/>
    </location>
</feature>
<feature type="strand" evidence="22">
    <location>
        <begin position="80"/>
        <end position="85"/>
    </location>
</feature>
<feature type="strand" evidence="22">
    <location>
        <begin position="88"/>
        <end position="93"/>
    </location>
</feature>
<feature type="strand" evidence="23">
    <location>
        <begin position="95"/>
        <end position="97"/>
    </location>
</feature>
<feature type="strand" evidence="21">
    <location>
        <begin position="102"/>
        <end position="104"/>
    </location>
</feature>
<feature type="helix" evidence="22">
    <location>
        <begin position="109"/>
        <end position="123"/>
    </location>
</feature>
<feature type="turn" evidence="22">
    <location>
        <begin position="124"/>
        <end position="126"/>
    </location>
</feature>
<feature type="strand" evidence="22">
    <location>
        <begin position="128"/>
        <end position="131"/>
    </location>
</feature>
<name>TXN4A_HUMAN</name>
<accession>P83876</accession>
<accession>B2RC18</accession>
<accession>O14834</accession>
<proteinExistence type="evidence at protein level"/>
<gene>
    <name type="primary">TXNL4A</name>
    <name type="synonym">DIM1</name>
    <name type="synonym">TXNL4</name>
</gene>
<evidence type="ECO:0000269" key="1">
    <source>
    </source>
</evidence>
<evidence type="ECO:0000269" key="2">
    <source>
    </source>
</evidence>
<evidence type="ECO:0000269" key="3">
    <source>
    </source>
</evidence>
<evidence type="ECO:0000269" key="4">
    <source>
    </source>
</evidence>
<evidence type="ECO:0000269" key="5">
    <source>
    </source>
</evidence>
<evidence type="ECO:0000269" key="6">
    <source>
    </source>
</evidence>
<evidence type="ECO:0000269" key="7">
    <source>
    </source>
</evidence>
<evidence type="ECO:0000269" key="8">
    <source>
    </source>
</evidence>
<evidence type="ECO:0000269" key="9">
    <source>
    </source>
</evidence>
<evidence type="ECO:0000269" key="10">
    <source>
    </source>
</evidence>
<evidence type="ECO:0000269" key="11">
    <source>
    </source>
</evidence>
<evidence type="ECO:0000303" key="12">
    <source>
    </source>
</evidence>
<evidence type="ECO:0000303" key="13">
    <source>
    </source>
</evidence>
<evidence type="ECO:0000303" key="14">
    <source ref="1"/>
</evidence>
<evidence type="ECO:0000305" key="15"/>
<evidence type="ECO:0000305" key="16">
    <source>
    </source>
</evidence>
<evidence type="ECO:0000305" key="17">
    <source>
    </source>
</evidence>
<evidence type="ECO:0007744" key="18">
    <source>
        <dbReference type="PDB" id="3JCR"/>
    </source>
</evidence>
<evidence type="ECO:0007744" key="19">
    <source>
        <dbReference type="PDB" id="5O9Z"/>
    </source>
</evidence>
<evidence type="ECO:0007744" key="20">
    <source>
    </source>
</evidence>
<evidence type="ECO:0007829" key="21">
    <source>
        <dbReference type="PDB" id="1PQN"/>
    </source>
</evidence>
<evidence type="ECO:0007829" key="22">
    <source>
        <dbReference type="PDB" id="1QGV"/>
    </source>
</evidence>
<evidence type="ECO:0007829" key="23">
    <source>
        <dbReference type="PDB" id="4BWQ"/>
    </source>
</evidence>
<evidence type="ECO:0007829" key="24">
    <source>
        <dbReference type="PDB" id="8QP8"/>
    </source>
</evidence>